<sequence>MNNKDLKTKFIFITGGVVSSLGKGITAASIGQILKNRGLKVSIQKLDPYINIDPGTMSPYQHGEVFVTDDGAETDLDLGHYERFLDENMSKKSNVTAGQIYQSVINKEREGKYLGKTVQVIPHITEEIKQKLIDVALFHKSDVVIVEIGGTVGDIESSPFLEAIRQVRFDFGYHNVLYLHTTLVPYLKKAQEIKTKPTQHSVKELRALGIQPQILVLRSEVPINPETKNKIAALCDINPQAIFEALDVDILYQMILNLHHQGIDDFILQHFKLTNFSNADLQSWKQLITRIQNLEKKVVIALVGKYIVLHDAYLSIIEALKHASYQYNCKLEIKWIDAEKVTPDNISSLLEDYDGILVPYGFGNRAIEGKILAINYARTNNIPFFGICLGMQLAVIEYARNVLHLQGANSLEVDEKTPHPVITKKIVDSNLGGTLRLGSYPCHLKANTKSKAIYNQEIIYERHRHRFEMNPHYVALFEKNNDFVVSGINQEQKLCEIVELKSHPWFIAVQFHPEFLSRPLKPHPLFKGFVEASLLNQKNK</sequence>
<accession>Q6YPW4</accession>
<proteinExistence type="inferred from homology"/>
<gene>
    <name evidence="1" type="primary">pyrG</name>
    <name type="ordered locus">PAM_611</name>
</gene>
<organism>
    <name type="scientific">Onion yellows phytoplasma (strain OY-M)</name>
    <dbReference type="NCBI Taxonomy" id="262768"/>
    <lineage>
        <taxon>Bacteria</taxon>
        <taxon>Bacillati</taxon>
        <taxon>Mycoplasmatota</taxon>
        <taxon>Mollicutes</taxon>
        <taxon>Acholeplasmatales</taxon>
        <taxon>Acholeplasmataceae</taxon>
        <taxon>Candidatus Phytoplasma</taxon>
        <taxon>16SrI (Aster yellows group)</taxon>
    </lineage>
</organism>
<name>PYRG_ONYPE</name>
<evidence type="ECO:0000255" key="1">
    <source>
        <dbReference type="HAMAP-Rule" id="MF_01227"/>
    </source>
</evidence>
<reference key="1">
    <citation type="journal article" date="2004" name="Nat. Genet.">
        <title>Reductive evolution suggested from the complete genome sequence of a plant-pathogenic phytoplasma.</title>
        <authorList>
            <person name="Oshima K."/>
            <person name="Kakizawa S."/>
            <person name="Nishigawa H."/>
            <person name="Jung H.-Y."/>
            <person name="Wei W."/>
            <person name="Suzuki S."/>
            <person name="Arashida R."/>
            <person name="Nakata D."/>
            <person name="Miyata S."/>
            <person name="Ugaki M."/>
            <person name="Namba S."/>
        </authorList>
    </citation>
    <scope>NUCLEOTIDE SEQUENCE [LARGE SCALE GENOMIC DNA]</scope>
    <source>
        <strain>OY-M</strain>
    </source>
</reference>
<dbReference type="EC" id="6.3.4.2" evidence="1"/>
<dbReference type="EMBL" id="AP006628">
    <property type="protein sequence ID" value="BAD04696.1"/>
    <property type="molecule type" value="Genomic_DNA"/>
</dbReference>
<dbReference type="SMR" id="Q6YPW4"/>
<dbReference type="STRING" id="262768.PAM_611"/>
<dbReference type="KEGG" id="poy:PAM_611"/>
<dbReference type="eggNOG" id="COG0504">
    <property type="taxonomic scope" value="Bacteria"/>
</dbReference>
<dbReference type="HOGENOM" id="CLU_011675_5_0_14"/>
<dbReference type="BioCyc" id="OYEL262768:G1G26-737-MONOMER"/>
<dbReference type="UniPathway" id="UPA00159">
    <property type="reaction ID" value="UER00277"/>
</dbReference>
<dbReference type="Proteomes" id="UP000002523">
    <property type="component" value="Chromosome"/>
</dbReference>
<dbReference type="GO" id="GO:0005829">
    <property type="term" value="C:cytosol"/>
    <property type="evidence" value="ECO:0007669"/>
    <property type="project" value="TreeGrafter"/>
</dbReference>
<dbReference type="GO" id="GO:0005524">
    <property type="term" value="F:ATP binding"/>
    <property type="evidence" value="ECO:0007669"/>
    <property type="project" value="UniProtKB-KW"/>
</dbReference>
<dbReference type="GO" id="GO:0003883">
    <property type="term" value="F:CTP synthase activity"/>
    <property type="evidence" value="ECO:0007669"/>
    <property type="project" value="UniProtKB-UniRule"/>
</dbReference>
<dbReference type="GO" id="GO:0004359">
    <property type="term" value="F:glutaminase activity"/>
    <property type="evidence" value="ECO:0007669"/>
    <property type="project" value="RHEA"/>
</dbReference>
<dbReference type="GO" id="GO:0042802">
    <property type="term" value="F:identical protein binding"/>
    <property type="evidence" value="ECO:0007669"/>
    <property type="project" value="TreeGrafter"/>
</dbReference>
<dbReference type="GO" id="GO:0046872">
    <property type="term" value="F:metal ion binding"/>
    <property type="evidence" value="ECO:0007669"/>
    <property type="project" value="UniProtKB-KW"/>
</dbReference>
<dbReference type="GO" id="GO:0044210">
    <property type="term" value="P:'de novo' CTP biosynthetic process"/>
    <property type="evidence" value="ECO:0007669"/>
    <property type="project" value="UniProtKB-UniRule"/>
</dbReference>
<dbReference type="GO" id="GO:0019856">
    <property type="term" value="P:pyrimidine nucleobase biosynthetic process"/>
    <property type="evidence" value="ECO:0007669"/>
    <property type="project" value="TreeGrafter"/>
</dbReference>
<dbReference type="CDD" id="cd03113">
    <property type="entry name" value="CTPS_N"/>
    <property type="match status" value="1"/>
</dbReference>
<dbReference type="CDD" id="cd01746">
    <property type="entry name" value="GATase1_CTP_Synthase"/>
    <property type="match status" value="1"/>
</dbReference>
<dbReference type="FunFam" id="3.40.50.300:FF:000009">
    <property type="entry name" value="CTP synthase"/>
    <property type="match status" value="1"/>
</dbReference>
<dbReference type="FunFam" id="3.40.50.880:FF:000002">
    <property type="entry name" value="CTP synthase"/>
    <property type="match status" value="1"/>
</dbReference>
<dbReference type="Gene3D" id="3.40.50.880">
    <property type="match status" value="1"/>
</dbReference>
<dbReference type="Gene3D" id="3.40.50.300">
    <property type="entry name" value="P-loop containing nucleotide triphosphate hydrolases"/>
    <property type="match status" value="1"/>
</dbReference>
<dbReference type="HAMAP" id="MF_01227">
    <property type="entry name" value="PyrG"/>
    <property type="match status" value="1"/>
</dbReference>
<dbReference type="InterPro" id="IPR029062">
    <property type="entry name" value="Class_I_gatase-like"/>
</dbReference>
<dbReference type="InterPro" id="IPR004468">
    <property type="entry name" value="CTP_synthase"/>
</dbReference>
<dbReference type="InterPro" id="IPR017456">
    <property type="entry name" value="CTP_synthase_N"/>
</dbReference>
<dbReference type="InterPro" id="IPR017926">
    <property type="entry name" value="GATASE"/>
</dbReference>
<dbReference type="InterPro" id="IPR033828">
    <property type="entry name" value="GATase1_CTP_Synthase"/>
</dbReference>
<dbReference type="InterPro" id="IPR027417">
    <property type="entry name" value="P-loop_NTPase"/>
</dbReference>
<dbReference type="NCBIfam" id="NF003792">
    <property type="entry name" value="PRK05380.1"/>
    <property type="match status" value="1"/>
</dbReference>
<dbReference type="NCBIfam" id="TIGR00337">
    <property type="entry name" value="PyrG"/>
    <property type="match status" value="1"/>
</dbReference>
<dbReference type="PANTHER" id="PTHR11550">
    <property type="entry name" value="CTP SYNTHASE"/>
    <property type="match status" value="1"/>
</dbReference>
<dbReference type="PANTHER" id="PTHR11550:SF0">
    <property type="entry name" value="CTP SYNTHASE-RELATED"/>
    <property type="match status" value="1"/>
</dbReference>
<dbReference type="Pfam" id="PF06418">
    <property type="entry name" value="CTP_synth_N"/>
    <property type="match status" value="1"/>
</dbReference>
<dbReference type="Pfam" id="PF00117">
    <property type="entry name" value="GATase"/>
    <property type="match status" value="1"/>
</dbReference>
<dbReference type="SUPFAM" id="SSF52317">
    <property type="entry name" value="Class I glutamine amidotransferase-like"/>
    <property type="match status" value="1"/>
</dbReference>
<dbReference type="SUPFAM" id="SSF52540">
    <property type="entry name" value="P-loop containing nucleoside triphosphate hydrolases"/>
    <property type="match status" value="1"/>
</dbReference>
<dbReference type="PROSITE" id="PS51273">
    <property type="entry name" value="GATASE_TYPE_1"/>
    <property type="match status" value="1"/>
</dbReference>
<keyword id="KW-0067">ATP-binding</keyword>
<keyword id="KW-0315">Glutamine amidotransferase</keyword>
<keyword id="KW-0436">Ligase</keyword>
<keyword id="KW-0460">Magnesium</keyword>
<keyword id="KW-0479">Metal-binding</keyword>
<keyword id="KW-0547">Nucleotide-binding</keyword>
<keyword id="KW-0665">Pyrimidine biosynthesis</keyword>
<feature type="chain" id="PRO_0000266168" description="CTP synthase">
    <location>
        <begin position="1"/>
        <end position="540"/>
    </location>
</feature>
<feature type="domain" description="Glutamine amidotransferase type-1" evidence="1">
    <location>
        <begin position="306"/>
        <end position="539"/>
    </location>
</feature>
<feature type="region of interest" description="Amidoligase domain" evidence="1">
    <location>
        <begin position="1"/>
        <end position="273"/>
    </location>
</feature>
<feature type="active site" description="Nucleophile; for glutamine hydrolysis" evidence="1">
    <location>
        <position position="388"/>
    </location>
</feature>
<feature type="active site" evidence="1">
    <location>
        <position position="512"/>
    </location>
</feature>
<feature type="active site" evidence="1">
    <location>
        <position position="514"/>
    </location>
</feature>
<feature type="binding site" evidence="1">
    <location>
        <position position="19"/>
    </location>
    <ligand>
        <name>CTP</name>
        <dbReference type="ChEBI" id="CHEBI:37563"/>
        <note>allosteric inhibitor</note>
    </ligand>
</feature>
<feature type="binding site" evidence="1">
    <location>
        <position position="19"/>
    </location>
    <ligand>
        <name>UTP</name>
        <dbReference type="ChEBI" id="CHEBI:46398"/>
    </ligand>
</feature>
<feature type="binding site" evidence="1">
    <location>
        <begin position="20"/>
        <end position="25"/>
    </location>
    <ligand>
        <name>ATP</name>
        <dbReference type="ChEBI" id="CHEBI:30616"/>
    </ligand>
</feature>
<feature type="binding site" evidence="1">
    <location>
        <position position="60"/>
    </location>
    <ligand>
        <name>L-glutamine</name>
        <dbReference type="ChEBI" id="CHEBI:58359"/>
    </ligand>
</feature>
<feature type="binding site" evidence="1">
    <location>
        <position position="77"/>
    </location>
    <ligand>
        <name>ATP</name>
        <dbReference type="ChEBI" id="CHEBI:30616"/>
    </ligand>
</feature>
<feature type="binding site" evidence="1">
    <location>
        <position position="77"/>
    </location>
    <ligand>
        <name>Mg(2+)</name>
        <dbReference type="ChEBI" id="CHEBI:18420"/>
    </ligand>
</feature>
<feature type="binding site" evidence="1">
    <location>
        <position position="147"/>
    </location>
    <ligand>
        <name>Mg(2+)</name>
        <dbReference type="ChEBI" id="CHEBI:18420"/>
    </ligand>
</feature>
<feature type="binding site" evidence="1">
    <location>
        <begin position="154"/>
        <end position="156"/>
    </location>
    <ligand>
        <name>CTP</name>
        <dbReference type="ChEBI" id="CHEBI:37563"/>
        <note>allosteric inhibitor</note>
    </ligand>
</feature>
<feature type="binding site" evidence="1">
    <location>
        <begin position="194"/>
        <end position="199"/>
    </location>
    <ligand>
        <name>CTP</name>
        <dbReference type="ChEBI" id="CHEBI:37563"/>
        <note>allosteric inhibitor</note>
    </ligand>
</feature>
<feature type="binding site" evidence="1">
    <location>
        <begin position="194"/>
        <end position="199"/>
    </location>
    <ligand>
        <name>UTP</name>
        <dbReference type="ChEBI" id="CHEBI:46398"/>
    </ligand>
</feature>
<feature type="binding site" evidence="1">
    <location>
        <position position="230"/>
    </location>
    <ligand>
        <name>CTP</name>
        <dbReference type="ChEBI" id="CHEBI:37563"/>
        <note>allosteric inhibitor</note>
    </ligand>
</feature>
<feature type="binding site" evidence="1">
    <location>
        <position position="230"/>
    </location>
    <ligand>
        <name>UTP</name>
        <dbReference type="ChEBI" id="CHEBI:46398"/>
    </ligand>
</feature>
<feature type="binding site" evidence="1">
    <location>
        <position position="361"/>
    </location>
    <ligand>
        <name>L-glutamine</name>
        <dbReference type="ChEBI" id="CHEBI:58359"/>
    </ligand>
</feature>
<feature type="binding site" evidence="1">
    <location>
        <begin position="389"/>
        <end position="392"/>
    </location>
    <ligand>
        <name>L-glutamine</name>
        <dbReference type="ChEBI" id="CHEBI:58359"/>
    </ligand>
</feature>
<feature type="binding site" evidence="1">
    <location>
        <position position="412"/>
    </location>
    <ligand>
        <name>L-glutamine</name>
        <dbReference type="ChEBI" id="CHEBI:58359"/>
    </ligand>
</feature>
<feature type="binding site" evidence="1">
    <location>
        <position position="466"/>
    </location>
    <ligand>
        <name>L-glutamine</name>
        <dbReference type="ChEBI" id="CHEBI:58359"/>
    </ligand>
</feature>
<comment type="function">
    <text evidence="1">Catalyzes the ATP-dependent amination of UTP to CTP with either L-glutamine or ammonia as the source of nitrogen. Regulates intracellular CTP levels through interactions with the four ribonucleotide triphosphates.</text>
</comment>
<comment type="catalytic activity">
    <reaction evidence="1">
        <text>UTP + L-glutamine + ATP + H2O = CTP + L-glutamate + ADP + phosphate + 2 H(+)</text>
        <dbReference type="Rhea" id="RHEA:26426"/>
        <dbReference type="ChEBI" id="CHEBI:15377"/>
        <dbReference type="ChEBI" id="CHEBI:15378"/>
        <dbReference type="ChEBI" id="CHEBI:29985"/>
        <dbReference type="ChEBI" id="CHEBI:30616"/>
        <dbReference type="ChEBI" id="CHEBI:37563"/>
        <dbReference type="ChEBI" id="CHEBI:43474"/>
        <dbReference type="ChEBI" id="CHEBI:46398"/>
        <dbReference type="ChEBI" id="CHEBI:58359"/>
        <dbReference type="ChEBI" id="CHEBI:456216"/>
        <dbReference type="EC" id="6.3.4.2"/>
    </reaction>
</comment>
<comment type="catalytic activity">
    <reaction evidence="1">
        <text>L-glutamine + H2O = L-glutamate + NH4(+)</text>
        <dbReference type="Rhea" id="RHEA:15889"/>
        <dbReference type="ChEBI" id="CHEBI:15377"/>
        <dbReference type="ChEBI" id="CHEBI:28938"/>
        <dbReference type="ChEBI" id="CHEBI:29985"/>
        <dbReference type="ChEBI" id="CHEBI:58359"/>
    </reaction>
</comment>
<comment type="catalytic activity">
    <reaction evidence="1">
        <text>UTP + NH4(+) + ATP = CTP + ADP + phosphate + 2 H(+)</text>
        <dbReference type="Rhea" id="RHEA:16597"/>
        <dbReference type="ChEBI" id="CHEBI:15378"/>
        <dbReference type="ChEBI" id="CHEBI:28938"/>
        <dbReference type="ChEBI" id="CHEBI:30616"/>
        <dbReference type="ChEBI" id="CHEBI:37563"/>
        <dbReference type="ChEBI" id="CHEBI:43474"/>
        <dbReference type="ChEBI" id="CHEBI:46398"/>
        <dbReference type="ChEBI" id="CHEBI:456216"/>
    </reaction>
</comment>
<comment type="activity regulation">
    <text evidence="1">Allosterically activated by GTP, when glutamine is the substrate; GTP has no effect on the reaction when ammonia is the substrate. The allosteric effector GTP functions by stabilizing the protein conformation that binds the tetrahedral intermediate(s) formed during glutamine hydrolysis. Inhibited by the product CTP, via allosteric rather than competitive inhibition.</text>
</comment>
<comment type="pathway">
    <text evidence="1">Pyrimidine metabolism; CTP biosynthesis via de novo pathway; CTP from UDP: step 2/2.</text>
</comment>
<comment type="subunit">
    <text evidence="1">Homotetramer.</text>
</comment>
<comment type="miscellaneous">
    <text evidence="1">CTPSs have evolved a hybrid strategy for distinguishing between UTP and CTP. The overlapping regions of the product feedback inhibitory and substrate sites recognize a common feature in both compounds, the triphosphate moiety. To differentiate isosteric substrate and product pyrimidine rings, an additional pocket far from the expected kinase/ligase catalytic site, specifically recognizes the cytosine and ribose portions of the product inhibitor.</text>
</comment>
<comment type="similarity">
    <text evidence="1">Belongs to the CTP synthase family.</text>
</comment>
<protein>
    <recommendedName>
        <fullName evidence="1">CTP synthase</fullName>
        <ecNumber evidence="1">6.3.4.2</ecNumber>
    </recommendedName>
    <alternativeName>
        <fullName evidence="1">Cytidine 5'-triphosphate synthase</fullName>
    </alternativeName>
    <alternativeName>
        <fullName evidence="1">Cytidine triphosphate synthetase</fullName>
        <shortName evidence="1">CTP synthetase</shortName>
        <shortName evidence="1">CTPS</shortName>
    </alternativeName>
    <alternativeName>
        <fullName evidence="1">UTP--ammonia ligase</fullName>
    </alternativeName>
</protein>